<proteinExistence type="predicted"/>
<feature type="chain" id="PRO_0000360220" description="SPbeta prophage-derived uncharacterized protein YorI">
    <location>
        <begin position="1"/>
        <end position="504"/>
    </location>
</feature>
<sequence>MLQDKQAIIQVLGSILKDPTILSESNKYKITSDDFPSRFHSILFFAMSNLFHQGTEVLNDVEIDGYLKDYDIQYKIFHDNKGLEYIEKIQELAVVENFDYHYKRLKKFSLLREMDGLGFDIKEIYDESLIDPKEQEKMQEQFDKKSIDEILTAYEMKIVDIKEKFRTSSESVGIQGGEGINELLDSFEESPDIGVPLNSEMLTSIFRGSRKKKFYLRSSITGGGKTRNMVADACRLSATELYDPKKKEWVSNPWSESSTVISTEMMAEELQSLALAYISSVEEKKILRNTINEKEKQLVRKAAKVLQESNIWFEHLPDFNIQEIERTIEKNVIKNNVEYVYFDYIHSSVTIFSEMSKKSGVNLREDQILLLMSDKLKGLCNKYDVYMMSATQLNGDWKEAWLKGQVIDASYLRGSKAIADKTDAAMIILPLSKKEKDAIDPILKEGFYPEPNFVTHVFKNRGNEYDKVKVFSHINMGNMRIKDCFTTNLDNELITVEKLNIKAG</sequence>
<organism>
    <name type="scientific">Bacillus subtilis (strain 168)</name>
    <dbReference type="NCBI Taxonomy" id="224308"/>
    <lineage>
        <taxon>Bacteria</taxon>
        <taxon>Bacillati</taxon>
        <taxon>Bacillota</taxon>
        <taxon>Bacilli</taxon>
        <taxon>Bacillales</taxon>
        <taxon>Bacillaceae</taxon>
        <taxon>Bacillus</taxon>
    </lineage>
</organism>
<name>YORI_BACSU</name>
<dbReference type="EMBL" id="AL009126">
    <property type="protein sequence ID" value="CAB13929.1"/>
    <property type="molecule type" value="Genomic_DNA"/>
</dbReference>
<dbReference type="RefSeq" id="NP_389919.1">
    <property type="nucleotide sequence ID" value="NC_000964.3"/>
</dbReference>
<dbReference type="RefSeq" id="WP_004399302.1">
    <property type="nucleotide sequence ID" value="NZ_OZ025638.1"/>
</dbReference>
<dbReference type="SMR" id="O31905"/>
<dbReference type="FunCoup" id="O31905">
    <property type="interactions" value="104"/>
</dbReference>
<dbReference type="STRING" id="224308.BSU20370"/>
<dbReference type="PaxDb" id="224308-BSU20370"/>
<dbReference type="EnsemblBacteria" id="CAB13929">
    <property type="protein sequence ID" value="CAB13929"/>
    <property type="gene ID" value="BSU_20370"/>
</dbReference>
<dbReference type="GeneID" id="939707"/>
<dbReference type="KEGG" id="bsu:BSU20370"/>
<dbReference type="PATRIC" id="fig|224308.179.peg.2227"/>
<dbReference type="eggNOG" id="COG0305">
    <property type="taxonomic scope" value="Bacteria"/>
</dbReference>
<dbReference type="InParanoid" id="O31905"/>
<dbReference type="OrthoDB" id="2397132at2"/>
<dbReference type="BioCyc" id="BSUB:BSU20370-MONOMER"/>
<dbReference type="Proteomes" id="UP000001570">
    <property type="component" value="Chromosome"/>
</dbReference>
<dbReference type="GO" id="GO:0005829">
    <property type="term" value="C:cytosol"/>
    <property type="evidence" value="ECO:0000318"/>
    <property type="project" value="GO_Central"/>
</dbReference>
<dbReference type="GO" id="GO:0005524">
    <property type="term" value="F:ATP binding"/>
    <property type="evidence" value="ECO:0007669"/>
    <property type="project" value="InterPro"/>
</dbReference>
<dbReference type="GO" id="GO:0003678">
    <property type="term" value="F:DNA helicase activity"/>
    <property type="evidence" value="ECO:0000318"/>
    <property type="project" value="GO_Central"/>
</dbReference>
<dbReference type="GO" id="GO:0006260">
    <property type="term" value="P:DNA replication"/>
    <property type="evidence" value="ECO:0000318"/>
    <property type="project" value="GO_Central"/>
</dbReference>
<dbReference type="Gene3D" id="1.10.860.10">
    <property type="entry name" value="DNAb Helicase, Chain A"/>
    <property type="match status" value="1"/>
</dbReference>
<dbReference type="Gene3D" id="3.40.50.300">
    <property type="entry name" value="P-loop containing nucleotide triphosphate hydrolases"/>
    <property type="match status" value="1"/>
</dbReference>
<dbReference type="InterPro" id="IPR036185">
    <property type="entry name" value="DNA_heli_DnaB-like_N_sf"/>
</dbReference>
<dbReference type="InterPro" id="IPR007694">
    <property type="entry name" value="DNA_helicase_DnaB-like_C"/>
</dbReference>
<dbReference type="InterPro" id="IPR016136">
    <property type="entry name" value="DNA_helicase_N/primase_C"/>
</dbReference>
<dbReference type="InterPro" id="IPR027417">
    <property type="entry name" value="P-loop_NTPase"/>
</dbReference>
<dbReference type="PANTHER" id="PTHR30153:SF2">
    <property type="entry name" value="REPLICATIVE DNA HELICASE"/>
    <property type="match status" value="1"/>
</dbReference>
<dbReference type="PANTHER" id="PTHR30153">
    <property type="entry name" value="REPLICATIVE DNA HELICASE DNAB"/>
    <property type="match status" value="1"/>
</dbReference>
<dbReference type="Pfam" id="PF03796">
    <property type="entry name" value="DnaB_C"/>
    <property type="match status" value="1"/>
</dbReference>
<dbReference type="SUPFAM" id="SSF48024">
    <property type="entry name" value="N-terminal domain of DnaB helicase"/>
    <property type="match status" value="1"/>
</dbReference>
<dbReference type="SUPFAM" id="SSF52540">
    <property type="entry name" value="P-loop containing nucleoside triphosphate hydrolases"/>
    <property type="match status" value="1"/>
</dbReference>
<reference key="1">
    <citation type="journal article" date="1997" name="Nature">
        <title>The complete genome sequence of the Gram-positive bacterium Bacillus subtilis.</title>
        <authorList>
            <person name="Kunst F."/>
            <person name="Ogasawara N."/>
            <person name="Moszer I."/>
            <person name="Albertini A.M."/>
            <person name="Alloni G."/>
            <person name="Azevedo V."/>
            <person name="Bertero M.G."/>
            <person name="Bessieres P."/>
            <person name="Bolotin A."/>
            <person name="Borchert S."/>
            <person name="Borriss R."/>
            <person name="Boursier L."/>
            <person name="Brans A."/>
            <person name="Braun M."/>
            <person name="Brignell S.C."/>
            <person name="Bron S."/>
            <person name="Brouillet S."/>
            <person name="Bruschi C.V."/>
            <person name="Caldwell B."/>
            <person name="Capuano V."/>
            <person name="Carter N.M."/>
            <person name="Choi S.-K."/>
            <person name="Codani J.-J."/>
            <person name="Connerton I.F."/>
            <person name="Cummings N.J."/>
            <person name="Daniel R.A."/>
            <person name="Denizot F."/>
            <person name="Devine K.M."/>
            <person name="Duesterhoeft A."/>
            <person name="Ehrlich S.D."/>
            <person name="Emmerson P.T."/>
            <person name="Entian K.-D."/>
            <person name="Errington J."/>
            <person name="Fabret C."/>
            <person name="Ferrari E."/>
            <person name="Foulger D."/>
            <person name="Fritz C."/>
            <person name="Fujita M."/>
            <person name="Fujita Y."/>
            <person name="Fuma S."/>
            <person name="Galizzi A."/>
            <person name="Galleron N."/>
            <person name="Ghim S.-Y."/>
            <person name="Glaser P."/>
            <person name="Goffeau A."/>
            <person name="Golightly E.J."/>
            <person name="Grandi G."/>
            <person name="Guiseppi G."/>
            <person name="Guy B.J."/>
            <person name="Haga K."/>
            <person name="Haiech J."/>
            <person name="Harwood C.R."/>
            <person name="Henaut A."/>
            <person name="Hilbert H."/>
            <person name="Holsappel S."/>
            <person name="Hosono S."/>
            <person name="Hullo M.-F."/>
            <person name="Itaya M."/>
            <person name="Jones L.-M."/>
            <person name="Joris B."/>
            <person name="Karamata D."/>
            <person name="Kasahara Y."/>
            <person name="Klaerr-Blanchard M."/>
            <person name="Klein C."/>
            <person name="Kobayashi Y."/>
            <person name="Koetter P."/>
            <person name="Koningstein G."/>
            <person name="Krogh S."/>
            <person name="Kumano M."/>
            <person name="Kurita K."/>
            <person name="Lapidus A."/>
            <person name="Lardinois S."/>
            <person name="Lauber J."/>
            <person name="Lazarevic V."/>
            <person name="Lee S.-M."/>
            <person name="Levine A."/>
            <person name="Liu H."/>
            <person name="Masuda S."/>
            <person name="Mauel C."/>
            <person name="Medigue C."/>
            <person name="Medina N."/>
            <person name="Mellado R.P."/>
            <person name="Mizuno M."/>
            <person name="Moestl D."/>
            <person name="Nakai S."/>
            <person name="Noback M."/>
            <person name="Noone D."/>
            <person name="O'Reilly M."/>
            <person name="Ogawa K."/>
            <person name="Ogiwara A."/>
            <person name="Oudega B."/>
            <person name="Park S.-H."/>
            <person name="Parro V."/>
            <person name="Pohl T.M."/>
            <person name="Portetelle D."/>
            <person name="Porwollik S."/>
            <person name="Prescott A.M."/>
            <person name="Presecan E."/>
            <person name="Pujic P."/>
            <person name="Purnelle B."/>
            <person name="Rapoport G."/>
            <person name="Rey M."/>
            <person name="Reynolds S."/>
            <person name="Rieger M."/>
            <person name="Rivolta C."/>
            <person name="Rocha E."/>
            <person name="Roche B."/>
            <person name="Rose M."/>
            <person name="Sadaie Y."/>
            <person name="Sato T."/>
            <person name="Scanlan E."/>
            <person name="Schleich S."/>
            <person name="Schroeter R."/>
            <person name="Scoffone F."/>
            <person name="Sekiguchi J."/>
            <person name="Sekowska A."/>
            <person name="Seror S.J."/>
            <person name="Serror P."/>
            <person name="Shin B.-S."/>
            <person name="Soldo B."/>
            <person name="Sorokin A."/>
            <person name="Tacconi E."/>
            <person name="Takagi T."/>
            <person name="Takahashi H."/>
            <person name="Takemaru K."/>
            <person name="Takeuchi M."/>
            <person name="Tamakoshi A."/>
            <person name="Tanaka T."/>
            <person name="Terpstra P."/>
            <person name="Tognoni A."/>
            <person name="Tosato V."/>
            <person name="Uchiyama S."/>
            <person name="Vandenbol M."/>
            <person name="Vannier F."/>
            <person name="Vassarotti A."/>
            <person name="Viari A."/>
            <person name="Wambutt R."/>
            <person name="Wedler E."/>
            <person name="Wedler H."/>
            <person name="Weitzenegger T."/>
            <person name="Winters P."/>
            <person name="Wipat A."/>
            <person name="Yamamoto H."/>
            <person name="Yamane K."/>
            <person name="Yasumoto K."/>
            <person name="Yata K."/>
            <person name="Yoshida K."/>
            <person name="Yoshikawa H.-F."/>
            <person name="Zumstein E."/>
            <person name="Yoshikawa H."/>
            <person name="Danchin A."/>
        </authorList>
    </citation>
    <scope>NUCLEOTIDE SEQUENCE [LARGE SCALE GENOMIC DNA]</scope>
    <source>
        <strain>168</strain>
    </source>
</reference>
<accession>O31905</accession>
<protein>
    <recommendedName>
        <fullName>SPbeta prophage-derived uncharacterized protein YorI</fullName>
    </recommendedName>
</protein>
<keyword id="KW-1185">Reference proteome</keyword>
<gene>
    <name type="primary">yorI</name>
    <name type="ordered locus">BSU20370</name>
</gene>